<accession>C1DJD3</accession>
<keyword id="KW-0028">Amino-acid biosynthesis</keyword>
<keyword id="KW-0963">Cytoplasm</keyword>
<keyword id="KW-0368">Histidine biosynthesis</keyword>
<keyword id="KW-0456">Lyase</keyword>
<organism>
    <name type="scientific">Azotobacter vinelandii (strain DJ / ATCC BAA-1303)</name>
    <dbReference type="NCBI Taxonomy" id="322710"/>
    <lineage>
        <taxon>Bacteria</taxon>
        <taxon>Pseudomonadati</taxon>
        <taxon>Pseudomonadota</taxon>
        <taxon>Gammaproteobacteria</taxon>
        <taxon>Pseudomonadales</taxon>
        <taxon>Pseudomonadaceae</taxon>
        <taxon>Azotobacter</taxon>
    </lineage>
</organism>
<dbReference type="EC" id="4.3.2.10" evidence="1"/>
<dbReference type="EMBL" id="CP001157">
    <property type="protein sequence ID" value="ACO76718.1"/>
    <property type="molecule type" value="Genomic_DNA"/>
</dbReference>
<dbReference type="RefSeq" id="WP_012699146.1">
    <property type="nucleotide sequence ID" value="NC_012560.1"/>
</dbReference>
<dbReference type="SMR" id="C1DJD3"/>
<dbReference type="STRING" id="322710.Avin_04630"/>
<dbReference type="EnsemblBacteria" id="ACO76718">
    <property type="protein sequence ID" value="ACO76718"/>
    <property type="gene ID" value="Avin_04630"/>
</dbReference>
<dbReference type="GeneID" id="88183893"/>
<dbReference type="KEGG" id="avn:Avin_04630"/>
<dbReference type="eggNOG" id="COG0107">
    <property type="taxonomic scope" value="Bacteria"/>
</dbReference>
<dbReference type="HOGENOM" id="CLU_048577_4_0_6"/>
<dbReference type="OrthoDB" id="9781903at2"/>
<dbReference type="UniPathway" id="UPA00031">
    <property type="reaction ID" value="UER00010"/>
</dbReference>
<dbReference type="Proteomes" id="UP000002424">
    <property type="component" value="Chromosome"/>
</dbReference>
<dbReference type="GO" id="GO:0005737">
    <property type="term" value="C:cytoplasm"/>
    <property type="evidence" value="ECO:0007669"/>
    <property type="project" value="UniProtKB-SubCell"/>
</dbReference>
<dbReference type="GO" id="GO:0000107">
    <property type="term" value="F:imidazoleglycerol-phosphate synthase activity"/>
    <property type="evidence" value="ECO:0007669"/>
    <property type="project" value="UniProtKB-UniRule"/>
</dbReference>
<dbReference type="GO" id="GO:0016829">
    <property type="term" value="F:lyase activity"/>
    <property type="evidence" value="ECO:0007669"/>
    <property type="project" value="UniProtKB-KW"/>
</dbReference>
<dbReference type="GO" id="GO:0000105">
    <property type="term" value="P:L-histidine biosynthetic process"/>
    <property type="evidence" value="ECO:0007669"/>
    <property type="project" value="UniProtKB-UniRule"/>
</dbReference>
<dbReference type="CDD" id="cd04731">
    <property type="entry name" value="HisF"/>
    <property type="match status" value="1"/>
</dbReference>
<dbReference type="FunFam" id="3.20.20.70:FF:000006">
    <property type="entry name" value="Imidazole glycerol phosphate synthase subunit HisF"/>
    <property type="match status" value="1"/>
</dbReference>
<dbReference type="Gene3D" id="3.20.20.70">
    <property type="entry name" value="Aldolase class I"/>
    <property type="match status" value="1"/>
</dbReference>
<dbReference type="HAMAP" id="MF_01013">
    <property type="entry name" value="HisF"/>
    <property type="match status" value="1"/>
</dbReference>
<dbReference type="InterPro" id="IPR013785">
    <property type="entry name" value="Aldolase_TIM"/>
</dbReference>
<dbReference type="InterPro" id="IPR006062">
    <property type="entry name" value="His_biosynth"/>
</dbReference>
<dbReference type="InterPro" id="IPR004651">
    <property type="entry name" value="HisF"/>
</dbReference>
<dbReference type="InterPro" id="IPR050064">
    <property type="entry name" value="IGPS_HisA/HisF"/>
</dbReference>
<dbReference type="InterPro" id="IPR011060">
    <property type="entry name" value="RibuloseP-bd_barrel"/>
</dbReference>
<dbReference type="NCBIfam" id="TIGR00735">
    <property type="entry name" value="hisF"/>
    <property type="match status" value="1"/>
</dbReference>
<dbReference type="PANTHER" id="PTHR21235:SF2">
    <property type="entry name" value="IMIDAZOLE GLYCEROL PHOSPHATE SYNTHASE HISHF"/>
    <property type="match status" value="1"/>
</dbReference>
<dbReference type="PANTHER" id="PTHR21235">
    <property type="entry name" value="IMIDAZOLE GLYCEROL PHOSPHATE SYNTHASE SUBUNIT HISF/H IGP SYNTHASE SUBUNIT HISF/H"/>
    <property type="match status" value="1"/>
</dbReference>
<dbReference type="Pfam" id="PF00977">
    <property type="entry name" value="His_biosynth"/>
    <property type="match status" value="1"/>
</dbReference>
<dbReference type="SUPFAM" id="SSF51366">
    <property type="entry name" value="Ribulose-phoshate binding barrel"/>
    <property type="match status" value="1"/>
</dbReference>
<comment type="function">
    <text evidence="1">IGPS catalyzes the conversion of PRFAR and glutamine to IGP, AICAR and glutamate. The HisF subunit catalyzes the cyclization activity that produces IGP and AICAR from PRFAR using the ammonia provided by the HisH subunit.</text>
</comment>
<comment type="catalytic activity">
    <reaction evidence="1">
        <text>5-[(5-phospho-1-deoxy-D-ribulos-1-ylimino)methylamino]-1-(5-phospho-beta-D-ribosyl)imidazole-4-carboxamide + L-glutamine = D-erythro-1-(imidazol-4-yl)glycerol 3-phosphate + 5-amino-1-(5-phospho-beta-D-ribosyl)imidazole-4-carboxamide + L-glutamate + H(+)</text>
        <dbReference type="Rhea" id="RHEA:24793"/>
        <dbReference type="ChEBI" id="CHEBI:15378"/>
        <dbReference type="ChEBI" id="CHEBI:29985"/>
        <dbReference type="ChEBI" id="CHEBI:58278"/>
        <dbReference type="ChEBI" id="CHEBI:58359"/>
        <dbReference type="ChEBI" id="CHEBI:58475"/>
        <dbReference type="ChEBI" id="CHEBI:58525"/>
        <dbReference type="EC" id="4.3.2.10"/>
    </reaction>
</comment>
<comment type="pathway">
    <text evidence="1">Amino-acid biosynthesis; L-histidine biosynthesis; L-histidine from 5-phospho-alpha-D-ribose 1-diphosphate: step 5/9.</text>
</comment>
<comment type="subunit">
    <text evidence="1">Heterodimer of HisH and HisF.</text>
</comment>
<comment type="subcellular location">
    <subcellularLocation>
        <location evidence="1">Cytoplasm</location>
    </subcellularLocation>
</comment>
<comment type="similarity">
    <text evidence="1">Belongs to the HisA/HisF family.</text>
</comment>
<protein>
    <recommendedName>
        <fullName evidence="1">Imidazole glycerol phosphate synthase subunit HisF</fullName>
        <ecNumber evidence="1">4.3.2.10</ecNumber>
    </recommendedName>
    <alternativeName>
        <fullName evidence="1">IGP synthase cyclase subunit</fullName>
    </alternativeName>
    <alternativeName>
        <fullName evidence="1">IGP synthase subunit HisF</fullName>
    </alternativeName>
    <alternativeName>
        <fullName evidence="1">ImGP synthase subunit HisF</fullName>
        <shortName evidence="1">IGPS subunit HisF</shortName>
    </alternativeName>
</protein>
<feature type="chain" id="PRO_1000213203" description="Imidazole glycerol phosphate synthase subunit HisF">
    <location>
        <begin position="1"/>
        <end position="256"/>
    </location>
</feature>
<feature type="active site" evidence="1">
    <location>
        <position position="12"/>
    </location>
</feature>
<feature type="active site" evidence="1">
    <location>
        <position position="131"/>
    </location>
</feature>
<proteinExistence type="inferred from homology"/>
<reference key="1">
    <citation type="journal article" date="2009" name="J. Bacteriol.">
        <title>Genome sequence of Azotobacter vinelandii, an obligate aerobe specialized to support diverse anaerobic metabolic processes.</title>
        <authorList>
            <person name="Setubal J.C."/>
            <person name="Dos Santos P."/>
            <person name="Goldman B.S."/>
            <person name="Ertesvaag H."/>
            <person name="Espin G."/>
            <person name="Rubio L.M."/>
            <person name="Valla S."/>
            <person name="Almeida N.F."/>
            <person name="Balasubramanian D."/>
            <person name="Cromes L."/>
            <person name="Curatti L."/>
            <person name="Du Z."/>
            <person name="Godsy E."/>
            <person name="Goodner B."/>
            <person name="Hellner-Burris K."/>
            <person name="Hernandez J.A."/>
            <person name="Houmiel K."/>
            <person name="Imperial J."/>
            <person name="Kennedy C."/>
            <person name="Larson T.J."/>
            <person name="Latreille P."/>
            <person name="Ligon L.S."/>
            <person name="Lu J."/>
            <person name="Maerk M."/>
            <person name="Miller N.M."/>
            <person name="Norton S."/>
            <person name="O'Carroll I.P."/>
            <person name="Paulsen I."/>
            <person name="Raulfs E.C."/>
            <person name="Roemer R."/>
            <person name="Rosser J."/>
            <person name="Segura D."/>
            <person name="Slater S."/>
            <person name="Stricklin S.L."/>
            <person name="Studholme D.J."/>
            <person name="Sun J."/>
            <person name="Viana C.J."/>
            <person name="Wallin E."/>
            <person name="Wang B."/>
            <person name="Wheeler C."/>
            <person name="Zhu H."/>
            <person name="Dean D.R."/>
            <person name="Dixon R."/>
            <person name="Wood D."/>
        </authorList>
    </citation>
    <scope>NUCLEOTIDE SEQUENCE [LARGE SCALE GENOMIC DNA]</scope>
    <source>
        <strain>DJ / ATCC BAA-1303</strain>
    </source>
</reference>
<sequence>MALAKRIIPCLDVDNGRVVKGVRFENIRDAGDPVEIAQRYDEQGADEITFLDITASHEGRDTTLHTVERMASQVFIPLTVGGGVRTVQDIRNLLNAGADKVSINTAAVFNPEFVGEAAGRFGSQCIVVAIDAKKVSGPGEAPRWEIFTHGGRKPTGLDAVAWAKKMEDYGAGEILLTSMDQDGMKSGFDLGVTRAISEAVGIPVIASGGVGNLEHLAAGILEGKADAVLAASIFHFGEYTVPEAKAYLAGRGIVVR</sequence>
<evidence type="ECO:0000255" key="1">
    <source>
        <dbReference type="HAMAP-Rule" id="MF_01013"/>
    </source>
</evidence>
<gene>
    <name evidence="1" type="primary">hisF</name>
    <name type="ordered locus">Avin_04630</name>
</gene>
<name>HIS6_AZOVD</name>